<organism>
    <name type="scientific">Klebsiella pneumoniae</name>
    <dbReference type="NCBI Taxonomy" id="573"/>
    <lineage>
        <taxon>Bacteria</taxon>
        <taxon>Pseudomonadati</taxon>
        <taxon>Pseudomonadota</taxon>
        <taxon>Gammaproteobacteria</taxon>
        <taxon>Enterobacterales</taxon>
        <taxon>Enterobacteriaceae</taxon>
        <taxon>Klebsiella/Raoultella group</taxon>
        <taxon>Klebsiella</taxon>
        <taxon>Klebsiella pneumoniae complex</taxon>
    </lineage>
</organism>
<reference key="1">
    <citation type="journal article" date="1997" name="J. Bacteriol.">
        <title>Substrate recognition domains as revealed by active hybrids between the D-arabinitol and ribitol transporters from Klebsiella pneumoniae.</title>
        <authorList>
            <person name="Heuel H."/>
            <person name="Turgut S."/>
            <person name="Schmid K."/>
            <person name="Lengeler J.W."/>
        </authorList>
    </citation>
    <scope>NUCLEOTIDE SEQUENCE [GENOMIC DNA]</scope>
    <source>
        <strain>1033-5P14 / KAY2026</strain>
    </source>
</reference>
<sequence>MSVNNKQWYGLPLNLIWGYVAIAVFMTGDGFELAFLSHYIKALGFTPAQASFAFTLYGLAAALSAWVSGVVAEIITPRKAMLIGFVLWCVFHVLFLVFGLGRANYALILLFYGIRGLAYPLFLYSFIVAIIHNVRSDSSSSALGWFWAVYSVGIGVFGSYIPSFTIPHIGEMGTLWLALLFCATGGIIALVSMRHTETPRHMQNLTTREKFAELGRAATLLYTNRSILFSSIVRIINTLSLFGFAVIMPMMFVDELGFTTSEWLQVWAAFFFTTIFSNVFWGIVAEKMGWMKVIRWFGCIGMALSSLAFYYLPQHFGHNFAMALVPAIALGIFVAAFVPMAAVFPALEPNHKGAAISVYNLSAGLSNFLAPAIAVVLLPYFSTIGVVIAYTALYILAFFLCPLIRVEQPGFTSDQHAKPFTANAAES</sequence>
<comment type="subcellular location">
    <subcellularLocation>
        <location evidence="2">Cell membrane</location>
        <topology evidence="2">Multi-pass membrane protein</topology>
    </subcellularLocation>
</comment>
<comment type="similarity">
    <text evidence="2">Belongs to the major facilitator superfamily. Sugar transporter (TC 2.A.1.1) family. CsbX subfamily.</text>
</comment>
<gene>
    <name type="primary">rbtT</name>
</gene>
<feature type="chain" id="PRO_0000050496" description="Ribitol transporter">
    <location>
        <begin position="1"/>
        <end position="427"/>
    </location>
</feature>
<feature type="topological domain" description="Cytoplasmic" evidence="1">
    <location>
        <begin position="1"/>
        <end position="7"/>
    </location>
</feature>
<feature type="transmembrane region" description="Helical; Name=1" evidence="1">
    <location>
        <begin position="8"/>
        <end position="28"/>
    </location>
</feature>
<feature type="topological domain" description="Extracellular" evidence="1">
    <location>
        <begin position="29"/>
        <end position="51"/>
    </location>
</feature>
<feature type="transmembrane region" description="Helical; Name=2" evidence="1">
    <location>
        <begin position="52"/>
        <end position="72"/>
    </location>
</feature>
<feature type="topological domain" description="Cytoplasmic" evidence="1">
    <location>
        <begin position="73"/>
        <end position="79"/>
    </location>
</feature>
<feature type="transmembrane region" description="Helical; Name=3" evidence="1">
    <location>
        <begin position="80"/>
        <end position="100"/>
    </location>
</feature>
<feature type="topological domain" description="Extracellular" evidence="1">
    <location>
        <begin position="101"/>
        <end position="107"/>
    </location>
</feature>
<feature type="transmembrane region" description="Helical; Name=4" evidence="1">
    <location>
        <begin position="108"/>
        <end position="128"/>
    </location>
</feature>
<feature type="topological domain" description="Cytoplasmic" evidence="1">
    <location>
        <begin position="129"/>
        <end position="141"/>
    </location>
</feature>
<feature type="transmembrane region" description="Helical; Name=5" evidence="1">
    <location>
        <begin position="142"/>
        <end position="162"/>
    </location>
</feature>
<feature type="topological domain" description="Extracellular" evidence="1">
    <location>
        <begin position="163"/>
        <end position="171"/>
    </location>
</feature>
<feature type="transmembrane region" description="Helical; Name=6" evidence="1">
    <location>
        <begin position="172"/>
        <end position="192"/>
    </location>
</feature>
<feature type="topological domain" description="Cytoplasmic" evidence="1">
    <location>
        <begin position="193"/>
        <end position="238"/>
    </location>
</feature>
<feature type="transmembrane region" description="Helical; Name=7" evidence="1">
    <location>
        <begin position="239"/>
        <end position="259"/>
    </location>
</feature>
<feature type="topological domain" description="Extracellular" evidence="1">
    <location>
        <begin position="260"/>
        <end position="263"/>
    </location>
</feature>
<feature type="transmembrane region" description="Helical; Name=8" evidence="1">
    <location>
        <begin position="264"/>
        <end position="284"/>
    </location>
</feature>
<feature type="topological domain" description="Cytoplasmic" evidence="1">
    <location>
        <begin position="285"/>
        <end position="295"/>
    </location>
</feature>
<feature type="transmembrane region" description="Helical; Name=9" evidence="1">
    <location>
        <begin position="296"/>
        <end position="316"/>
    </location>
</feature>
<feature type="topological domain" description="Extracellular" evidence="1">
    <location>
        <begin position="317"/>
        <end position="323"/>
    </location>
</feature>
<feature type="transmembrane region" description="Helical; Name=10" evidence="1">
    <location>
        <begin position="324"/>
        <end position="344"/>
    </location>
</feature>
<feature type="topological domain" description="Cytoplasmic" evidence="1">
    <location>
        <begin position="345"/>
        <end position="360"/>
    </location>
</feature>
<feature type="transmembrane region" description="Helical; Name=11" evidence="1">
    <location>
        <begin position="361"/>
        <end position="381"/>
    </location>
</feature>
<feature type="topological domain" description="Extracellular" evidence="1">
    <location>
        <begin position="382"/>
        <end position="383"/>
    </location>
</feature>
<feature type="transmembrane region" description="Helical; Name=12" evidence="1">
    <location>
        <begin position="384"/>
        <end position="404"/>
    </location>
</feature>
<feature type="topological domain" description="Cytoplasmic" evidence="1">
    <location>
        <begin position="405"/>
        <end position="427"/>
    </location>
</feature>
<proteinExistence type="inferred from homology"/>
<name>RBTT_KLEPN</name>
<accession>O52717</accession>
<evidence type="ECO:0000255" key="1"/>
<evidence type="ECO:0000305" key="2"/>
<keyword id="KW-1003">Cell membrane</keyword>
<keyword id="KW-0472">Membrane</keyword>
<keyword id="KW-0762">Sugar transport</keyword>
<keyword id="KW-0812">Transmembrane</keyword>
<keyword id="KW-1133">Transmembrane helix</keyword>
<keyword id="KW-0813">Transport</keyword>
<dbReference type="EMBL" id="AF045244">
    <property type="protein sequence ID" value="AAC26496.1"/>
    <property type="molecule type" value="Genomic_DNA"/>
</dbReference>
<dbReference type="PIR" id="S78599">
    <property type="entry name" value="S78599"/>
</dbReference>
<dbReference type="RefSeq" id="WP_004175116.1">
    <property type="nucleotide sequence ID" value="NZ_WXZO01000031.1"/>
</dbReference>
<dbReference type="SMR" id="O52717"/>
<dbReference type="TCDB" id="2.A.1.18.2">
    <property type="family name" value="the major facilitator superfamily (mfs)"/>
</dbReference>
<dbReference type="OMA" id="GWRNTVM"/>
<dbReference type="GO" id="GO:0005886">
    <property type="term" value="C:plasma membrane"/>
    <property type="evidence" value="ECO:0007669"/>
    <property type="project" value="UniProtKB-SubCell"/>
</dbReference>
<dbReference type="GO" id="GO:0022857">
    <property type="term" value="F:transmembrane transporter activity"/>
    <property type="evidence" value="ECO:0007669"/>
    <property type="project" value="InterPro"/>
</dbReference>
<dbReference type="CDD" id="cd17337">
    <property type="entry name" value="MFS_CsbX"/>
    <property type="match status" value="1"/>
</dbReference>
<dbReference type="Gene3D" id="1.20.1250.20">
    <property type="entry name" value="MFS general substrate transporter like domains"/>
    <property type="match status" value="2"/>
</dbReference>
<dbReference type="InterPro" id="IPR011701">
    <property type="entry name" value="MFS"/>
</dbReference>
<dbReference type="InterPro" id="IPR020846">
    <property type="entry name" value="MFS_dom"/>
</dbReference>
<dbReference type="InterPro" id="IPR036259">
    <property type="entry name" value="MFS_trans_sf"/>
</dbReference>
<dbReference type="InterPro" id="IPR004748">
    <property type="entry name" value="Polyol_permease-like"/>
</dbReference>
<dbReference type="InterPro" id="IPR052528">
    <property type="entry name" value="Sugar_transport-like"/>
</dbReference>
<dbReference type="NCBIfam" id="TIGR00897">
    <property type="entry name" value="2A0118"/>
    <property type="match status" value="1"/>
</dbReference>
<dbReference type="PANTHER" id="PTHR23526:SF4">
    <property type="entry name" value="INTEGRAL MEMBRANE TRANSPORT PROTEIN"/>
    <property type="match status" value="1"/>
</dbReference>
<dbReference type="PANTHER" id="PTHR23526">
    <property type="entry name" value="INTEGRAL MEMBRANE TRANSPORT PROTEIN-RELATED"/>
    <property type="match status" value="1"/>
</dbReference>
<dbReference type="Pfam" id="PF07690">
    <property type="entry name" value="MFS_1"/>
    <property type="match status" value="1"/>
</dbReference>
<dbReference type="SUPFAM" id="SSF103473">
    <property type="entry name" value="MFS general substrate transporter"/>
    <property type="match status" value="1"/>
</dbReference>
<dbReference type="PROSITE" id="PS50850">
    <property type="entry name" value="MFS"/>
    <property type="match status" value="1"/>
</dbReference>
<protein>
    <recommendedName>
        <fullName>Ribitol transporter</fullName>
    </recommendedName>
</protein>